<feature type="chain" id="PRO_0000212623" description="Divalent metal cation transporter MntH">
    <location>
        <begin position="1"/>
        <end position="448"/>
    </location>
</feature>
<feature type="transmembrane region" description="Helical" evidence="1">
    <location>
        <begin position="41"/>
        <end position="61"/>
    </location>
</feature>
<feature type="transmembrane region" description="Helical" evidence="1">
    <location>
        <begin position="69"/>
        <end position="89"/>
    </location>
</feature>
<feature type="transmembrane region" description="Helical" evidence="1">
    <location>
        <begin position="117"/>
        <end position="137"/>
    </location>
</feature>
<feature type="transmembrane region" description="Helical" evidence="1">
    <location>
        <begin position="147"/>
        <end position="167"/>
    </location>
</feature>
<feature type="transmembrane region" description="Helical" evidence="1">
    <location>
        <begin position="176"/>
        <end position="196"/>
    </location>
</feature>
<feature type="transmembrane region" description="Helical" evidence="1">
    <location>
        <begin position="215"/>
        <end position="235"/>
    </location>
</feature>
<feature type="transmembrane region" description="Helical" evidence="1">
    <location>
        <begin position="270"/>
        <end position="290"/>
    </location>
</feature>
<feature type="transmembrane region" description="Helical" evidence="1">
    <location>
        <begin position="307"/>
        <end position="327"/>
    </location>
</feature>
<feature type="transmembrane region" description="Helical" evidence="1">
    <location>
        <begin position="363"/>
        <end position="383"/>
    </location>
</feature>
<feature type="transmembrane region" description="Helical" evidence="1">
    <location>
        <begin position="384"/>
        <end position="404"/>
    </location>
</feature>
<feature type="transmembrane region" description="Helical" evidence="1">
    <location>
        <begin position="424"/>
        <end position="444"/>
    </location>
</feature>
<feature type="region of interest" description="Disordered" evidence="2">
    <location>
        <begin position="1"/>
        <end position="20"/>
    </location>
</feature>
<feature type="compositionally biased region" description="Basic and acidic residues" evidence="2">
    <location>
        <begin position="1"/>
        <end position="10"/>
    </location>
</feature>
<proteinExistence type="inferred from homology"/>
<protein>
    <recommendedName>
        <fullName evidence="1">Divalent metal cation transporter MntH</fullName>
    </recommendedName>
</protein>
<name>MNTH_LISMF</name>
<gene>
    <name evidence="1" type="primary">mntH</name>
    <name type="ordered locus">LMOf2365_1443</name>
</gene>
<comment type="function">
    <text evidence="1">H(+)-stimulated, divalent metal cation uptake system.</text>
</comment>
<comment type="subcellular location">
    <subcellularLocation>
        <location evidence="1">Cell membrane</location>
        <topology evidence="1">Multi-pass membrane protein</topology>
    </subcellularLocation>
</comment>
<comment type="similarity">
    <text evidence="1">Belongs to the NRAMP family.</text>
</comment>
<dbReference type="EMBL" id="AE017262">
    <property type="protein sequence ID" value="AAT04218.1"/>
    <property type="molecule type" value="Genomic_DNA"/>
</dbReference>
<dbReference type="RefSeq" id="WP_003721929.1">
    <property type="nucleotide sequence ID" value="NC_002973.6"/>
</dbReference>
<dbReference type="SMR" id="Q71ZP6"/>
<dbReference type="KEGG" id="lmf:LMOf2365_1443"/>
<dbReference type="HOGENOM" id="CLU_020088_2_0_9"/>
<dbReference type="GO" id="GO:0005886">
    <property type="term" value="C:plasma membrane"/>
    <property type="evidence" value="ECO:0007669"/>
    <property type="project" value="UniProtKB-SubCell"/>
</dbReference>
<dbReference type="GO" id="GO:0015086">
    <property type="term" value="F:cadmium ion transmembrane transporter activity"/>
    <property type="evidence" value="ECO:0007669"/>
    <property type="project" value="TreeGrafter"/>
</dbReference>
<dbReference type="GO" id="GO:0005384">
    <property type="term" value="F:manganese ion transmembrane transporter activity"/>
    <property type="evidence" value="ECO:0007669"/>
    <property type="project" value="TreeGrafter"/>
</dbReference>
<dbReference type="GO" id="GO:0046872">
    <property type="term" value="F:metal ion binding"/>
    <property type="evidence" value="ECO:0007669"/>
    <property type="project" value="UniProtKB-UniRule"/>
</dbReference>
<dbReference type="GO" id="GO:0015293">
    <property type="term" value="F:symporter activity"/>
    <property type="evidence" value="ECO:0007669"/>
    <property type="project" value="UniProtKB-UniRule"/>
</dbReference>
<dbReference type="GO" id="GO:0034755">
    <property type="term" value="P:iron ion transmembrane transport"/>
    <property type="evidence" value="ECO:0007669"/>
    <property type="project" value="TreeGrafter"/>
</dbReference>
<dbReference type="HAMAP" id="MF_00221">
    <property type="entry name" value="NRAMP"/>
    <property type="match status" value="1"/>
</dbReference>
<dbReference type="InterPro" id="IPR001046">
    <property type="entry name" value="NRAMP_fam"/>
</dbReference>
<dbReference type="NCBIfam" id="TIGR01197">
    <property type="entry name" value="nramp"/>
    <property type="match status" value="1"/>
</dbReference>
<dbReference type="NCBIfam" id="NF037982">
    <property type="entry name" value="Nramp_1"/>
    <property type="match status" value="1"/>
</dbReference>
<dbReference type="NCBIfam" id="NF001923">
    <property type="entry name" value="PRK00701.1"/>
    <property type="match status" value="1"/>
</dbReference>
<dbReference type="PANTHER" id="PTHR11706:SF33">
    <property type="entry name" value="NATURAL RESISTANCE-ASSOCIATED MACROPHAGE PROTEIN 2"/>
    <property type="match status" value="1"/>
</dbReference>
<dbReference type="PANTHER" id="PTHR11706">
    <property type="entry name" value="SOLUTE CARRIER PROTEIN FAMILY 11 MEMBER"/>
    <property type="match status" value="1"/>
</dbReference>
<dbReference type="Pfam" id="PF01566">
    <property type="entry name" value="Nramp"/>
    <property type="match status" value="1"/>
</dbReference>
<dbReference type="PRINTS" id="PR00447">
    <property type="entry name" value="NATRESASSCMP"/>
</dbReference>
<accession>Q71ZP6</accession>
<keyword id="KW-1003">Cell membrane</keyword>
<keyword id="KW-0406">Ion transport</keyword>
<keyword id="KW-0472">Membrane</keyword>
<keyword id="KW-0769">Symport</keyword>
<keyword id="KW-0812">Transmembrane</keyword>
<keyword id="KW-1133">Transmembrane helix</keyword>
<keyword id="KW-0813">Transport</keyword>
<evidence type="ECO:0000255" key="1">
    <source>
        <dbReference type="HAMAP-Rule" id="MF_00221"/>
    </source>
</evidence>
<evidence type="ECO:0000256" key="2">
    <source>
        <dbReference type="SAM" id="MobiDB-lite"/>
    </source>
</evidence>
<reference key="1">
    <citation type="journal article" date="2004" name="Nucleic Acids Res.">
        <title>Whole genome comparisons of serotype 4b and 1/2a strains of the food-borne pathogen Listeria monocytogenes reveal new insights into the core genome components of this species.</title>
        <authorList>
            <person name="Nelson K.E."/>
            <person name="Fouts D.E."/>
            <person name="Mongodin E.F."/>
            <person name="Ravel J."/>
            <person name="DeBoy R.T."/>
            <person name="Kolonay J.F."/>
            <person name="Rasko D.A."/>
            <person name="Angiuoli S.V."/>
            <person name="Gill S.R."/>
            <person name="Paulsen I.T."/>
            <person name="Peterson J.D."/>
            <person name="White O."/>
            <person name="Nelson W.C."/>
            <person name="Nierman W.C."/>
            <person name="Beanan M.J."/>
            <person name="Brinkac L.M."/>
            <person name="Daugherty S.C."/>
            <person name="Dodson R.J."/>
            <person name="Durkin A.S."/>
            <person name="Madupu R."/>
            <person name="Haft D.H."/>
            <person name="Selengut J."/>
            <person name="Van Aken S.E."/>
            <person name="Khouri H.M."/>
            <person name="Fedorova N."/>
            <person name="Forberger H.A."/>
            <person name="Tran B."/>
            <person name="Kathariou S."/>
            <person name="Wonderling L.D."/>
            <person name="Uhlich G.A."/>
            <person name="Bayles D.O."/>
            <person name="Luchansky J.B."/>
            <person name="Fraser C.M."/>
        </authorList>
    </citation>
    <scope>NUCLEOTIDE SEQUENCE [LARGE SCALE GENOMIC DNA]</scope>
    <source>
        <strain>F2365</strain>
    </source>
</reference>
<organism>
    <name type="scientific">Listeria monocytogenes serotype 4b (strain F2365)</name>
    <dbReference type="NCBI Taxonomy" id="265669"/>
    <lineage>
        <taxon>Bacteria</taxon>
        <taxon>Bacillati</taxon>
        <taxon>Bacillota</taxon>
        <taxon>Bacilli</taxon>
        <taxon>Bacillales</taxon>
        <taxon>Listeriaceae</taxon>
        <taxon>Listeria</taxon>
    </lineage>
</organism>
<sequence>MKKDKTERTKQSWRKAQNAPSLSEVNNSVAIPKNAKFFRKLFAFMGPGALIAVGYVDPGNWATSIAGGSEFGYTLLSVILISNILAVLLQSLASKLGIVTGRDLAQASSDHFSKPFGFVLWILAELAIIATDIAEVIGSAIALNLLFGIPLIWGVCITALDIFLVLFLQHKGFRYIEVIVITLMVTILVCFGAEMVMSHPDMQAIAKGFIPQSEIVTNPAMLYIALGILGATVMPHNLYLHSSIVQTRQYARTKEGKKEAIRFSFIDSTFSLTIALLINASILILAAAAFYTTGQHNVAGIEDAYKLLNPTLGSSIASTVFAVALLASGQNSTLTGTLAGQIVMEGFLNIRLKPVVRRLLTRVLAIVPAVIITALYGANGINELLIFSQVILSMQLSFAVIPLVMFTSDKQKMGEFVNPTWLKIISWAVAIFIAVLNIYLLFYTLTSL</sequence>